<proteinExistence type="inferred from homology"/>
<reference key="1">
    <citation type="journal article" date="2006" name="Proc. Natl. Acad. Sci. U.S.A.">
        <title>Comparative genomics of the lactic acid bacteria.</title>
        <authorList>
            <person name="Makarova K.S."/>
            <person name="Slesarev A."/>
            <person name="Wolf Y.I."/>
            <person name="Sorokin A."/>
            <person name="Mirkin B."/>
            <person name="Koonin E.V."/>
            <person name="Pavlov A."/>
            <person name="Pavlova N."/>
            <person name="Karamychev V."/>
            <person name="Polouchine N."/>
            <person name="Shakhova V."/>
            <person name="Grigoriev I."/>
            <person name="Lou Y."/>
            <person name="Rohksar D."/>
            <person name="Lucas S."/>
            <person name="Huang K."/>
            <person name="Goodstein D.M."/>
            <person name="Hawkins T."/>
            <person name="Plengvidhya V."/>
            <person name="Welker D."/>
            <person name="Hughes J."/>
            <person name="Goh Y."/>
            <person name="Benson A."/>
            <person name="Baldwin K."/>
            <person name="Lee J.-H."/>
            <person name="Diaz-Muniz I."/>
            <person name="Dosti B."/>
            <person name="Smeianov V."/>
            <person name="Wechter W."/>
            <person name="Barabote R."/>
            <person name="Lorca G."/>
            <person name="Altermann E."/>
            <person name="Barrangou R."/>
            <person name="Ganesan B."/>
            <person name="Xie Y."/>
            <person name="Rawsthorne H."/>
            <person name="Tamir D."/>
            <person name="Parker C."/>
            <person name="Breidt F."/>
            <person name="Broadbent J.R."/>
            <person name="Hutkins R."/>
            <person name="O'Sullivan D."/>
            <person name="Steele J."/>
            <person name="Unlu G."/>
            <person name="Saier M.H. Jr."/>
            <person name="Klaenhammer T."/>
            <person name="Richardson P."/>
            <person name="Kozyavkin S."/>
            <person name="Weimer B.C."/>
            <person name="Mills D.A."/>
        </authorList>
    </citation>
    <scope>NUCLEOTIDE SEQUENCE [LARGE SCALE GENOMIC DNA]</scope>
    <source>
        <strain>ATCC 334 / BCRC 17002 / CCUG 31169 / CIP 107868 / KCTC 3260 / NRRL B-441</strain>
    </source>
</reference>
<protein>
    <recommendedName>
        <fullName evidence="2">Translation initiation factor IF-2</fullName>
    </recommendedName>
</protein>
<feature type="chain" id="PRO_1000008259" description="Translation initiation factor IF-2">
    <location>
        <begin position="1"/>
        <end position="943"/>
    </location>
</feature>
<feature type="domain" description="tr-type G">
    <location>
        <begin position="444"/>
        <end position="613"/>
    </location>
</feature>
<feature type="region of interest" description="Disordered" evidence="3">
    <location>
        <begin position="35"/>
        <end position="359"/>
    </location>
</feature>
<feature type="region of interest" description="G1" evidence="1">
    <location>
        <begin position="453"/>
        <end position="460"/>
    </location>
</feature>
<feature type="region of interest" description="G2" evidence="1">
    <location>
        <begin position="478"/>
        <end position="482"/>
    </location>
</feature>
<feature type="region of interest" description="G3" evidence="1">
    <location>
        <begin position="499"/>
        <end position="502"/>
    </location>
</feature>
<feature type="region of interest" description="G4" evidence="1">
    <location>
        <begin position="553"/>
        <end position="556"/>
    </location>
</feature>
<feature type="region of interest" description="G5" evidence="1">
    <location>
        <begin position="589"/>
        <end position="591"/>
    </location>
</feature>
<feature type="compositionally biased region" description="Low complexity" evidence="3">
    <location>
        <begin position="57"/>
        <end position="76"/>
    </location>
</feature>
<feature type="compositionally biased region" description="Basic and acidic residues" evidence="3">
    <location>
        <begin position="92"/>
        <end position="103"/>
    </location>
</feature>
<feature type="compositionally biased region" description="Basic and acidic residues" evidence="3">
    <location>
        <begin position="110"/>
        <end position="124"/>
    </location>
</feature>
<feature type="compositionally biased region" description="Polar residues" evidence="3">
    <location>
        <begin position="130"/>
        <end position="141"/>
    </location>
</feature>
<feature type="compositionally biased region" description="Low complexity" evidence="3">
    <location>
        <begin position="142"/>
        <end position="190"/>
    </location>
</feature>
<feature type="compositionally biased region" description="Basic and acidic residues" evidence="3">
    <location>
        <begin position="191"/>
        <end position="205"/>
    </location>
</feature>
<feature type="compositionally biased region" description="Basic and acidic residues" evidence="3">
    <location>
        <begin position="239"/>
        <end position="250"/>
    </location>
</feature>
<feature type="compositionally biased region" description="Basic and acidic residues" evidence="3">
    <location>
        <begin position="259"/>
        <end position="271"/>
    </location>
</feature>
<feature type="compositionally biased region" description="Low complexity" evidence="3">
    <location>
        <begin position="289"/>
        <end position="299"/>
    </location>
</feature>
<feature type="compositionally biased region" description="Low complexity" evidence="3">
    <location>
        <begin position="315"/>
        <end position="330"/>
    </location>
</feature>
<feature type="compositionally biased region" description="Basic residues" evidence="3">
    <location>
        <begin position="331"/>
        <end position="342"/>
    </location>
</feature>
<feature type="compositionally biased region" description="Basic and acidic residues" evidence="3">
    <location>
        <begin position="346"/>
        <end position="358"/>
    </location>
</feature>
<feature type="binding site" evidence="2">
    <location>
        <begin position="453"/>
        <end position="460"/>
    </location>
    <ligand>
        <name>GTP</name>
        <dbReference type="ChEBI" id="CHEBI:37565"/>
    </ligand>
</feature>
<feature type="binding site" evidence="2">
    <location>
        <begin position="499"/>
        <end position="503"/>
    </location>
    <ligand>
        <name>GTP</name>
        <dbReference type="ChEBI" id="CHEBI:37565"/>
    </ligand>
</feature>
<feature type="binding site" evidence="2">
    <location>
        <begin position="553"/>
        <end position="556"/>
    </location>
    <ligand>
        <name>GTP</name>
        <dbReference type="ChEBI" id="CHEBI:37565"/>
    </ligand>
</feature>
<keyword id="KW-0963">Cytoplasm</keyword>
<keyword id="KW-0342">GTP-binding</keyword>
<keyword id="KW-0396">Initiation factor</keyword>
<keyword id="KW-0547">Nucleotide-binding</keyword>
<keyword id="KW-0648">Protein biosynthesis</keyword>
<keyword id="KW-1185">Reference proteome</keyword>
<sequence length="943" mass="103123">MGKKRVYEFAKEMHVDNKDVIDIAKNLGIEVKNHMSSIDQDQEAKIKGMLSKQSAGKAPSSQAAKTPAKAAKTSSAAHKEAAKKPVAASAKSNDHADAAEHSQKNAKPAAKQENKPARSNKTSDGKIILSKSTILRPRSTQTAHTNTNHNRGGNTASANNTANGRNSNRSNNNNNNRSANNANRSGNNNRSNERNRNDRNRRFDNQRVTGPMPRAGRPTAANGNPRPVAGNGGKFVKPASERQQPKRQEAVKPANAASKRSEQPRTERPRTEQPAATTNQRFTKPAPVPAAAAPKPASAGSQDNRNSRRGGGNSNFGRSNSYGNRNGFNRNNRRNKKNKRRQQSAPKKEMPQRKERPLPETLIYEVGMNAQDLGKILHREPAELIKKLFMLGVMVNQNQSLDKDTIELLATDYGIDAQEKVHEDISDLDKVFEEENKNQDNLQPRPPVVTIMGHVDHGKTTLLDKLRHTHVTEGEAGGITQHIGAYQVKLRDRLITFLDTPGHAAFTNMRARGADITDIVVLVVAADDGVMPQTIEAIHHAQAAKAPIIVAVNKIDKPGANPDHVMEQLTEYGLIPEDWGGDTIFVKISAKFGKNIDELLEMILLEADVLELKANPDQKAVGTVIEARLDKGKGPVATVLVQQGTLHTGDPIVVGNTFGRVRAMTNDHGRRVKDALPSMPVEITGINDVPQSADKFVVFADERTARAAGEERAKRAQEEERKNTNHVTLDNLFETMKEGQLKEVDVIIKADVQGSVEALAGSLEKIEVKGVRVNIIHQAVGAINESDVTLAAASNAIIIGFNVRPTALAKAQAEQDDVDIRLHSVIYKAIEEVEAAMKGMLEPTYEEKVIGTVTVRETIPVSKVGTVVGGYVDSGYITRDAGVRLVRDGIVKYEGKLGSLRRFKDDVKEVRQGFELGLTIENYNDIKVDDQIEAFTMEQVPVK</sequence>
<gene>
    <name evidence="2" type="primary">infB</name>
    <name type="ordered locus">LSEI_1573</name>
</gene>
<accession>Q038M5</accession>
<dbReference type="EMBL" id="CP000423">
    <property type="protein sequence ID" value="ABJ70347.1"/>
    <property type="molecule type" value="Genomic_DNA"/>
</dbReference>
<dbReference type="RefSeq" id="WP_003575282.1">
    <property type="nucleotide sequence ID" value="NC_008526.1"/>
</dbReference>
<dbReference type="RefSeq" id="YP_806789.1">
    <property type="nucleotide sequence ID" value="NC_008526.1"/>
</dbReference>
<dbReference type="SMR" id="Q038M5"/>
<dbReference type="STRING" id="321967.LSEI_1573"/>
<dbReference type="PaxDb" id="321967-LSEI_1573"/>
<dbReference type="KEGG" id="lca:LSEI_1573"/>
<dbReference type="PATRIC" id="fig|321967.11.peg.1553"/>
<dbReference type="HOGENOM" id="CLU_006301_5_0_9"/>
<dbReference type="Proteomes" id="UP000001651">
    <property type="component" value="Chromosome"/>
</dbReference>
<dbReference type="GO" id="GO:0005829">
    <property type="term" value="C:cytosol"/>
    <property type="evidence" value="ECO:0007669"/>
    <property type="project" value="TreeGrafter"/>
</dbReference>
<dbReference type="GO" id="GO:0005525">
    <property type="term" value="F:GTP binding"/>
    <property type="evidence" value="ECO:0007669"/>
    <property type="project" value="UniProtKB-KW"/>
</dbReference>
<dbReference type="GO" id="GO:0003924">
    <property type="term" value="F:GTPase activity"/>
    <property type="evidence" value="ECO:0007669"/>
    <property type="project" value="UniProtKB-UniRule"/>
</dbReference>
<dbReference type="GO" id="GO:0003743">
    <property type="term" value="F:translation initiation factor activity"/>
    <property type="evidence" value="ECO:0007669"/>
    <property type="project" value="UniProtKB-UniRule"/>
</dbReference>
<dbReference type="CDD" id="cd01887">
    <property type="entry name" value="IF2_eIF5B"/>
    <property type="match status" value="1"/>
</dbReference>
<dbReference type="CDD" id="cd03702">
    <property type="entry name" value="IF2_mtIF2_II"/>
    <property type="match status" value="1"/>
</dbReference>
<dbReference type="CDD" id="cd03692">
    <property type="entry name" value="mtIF2_IVc"/>
    <property type="match status" value="1"/>
</dbReference>
<dbReference type="FunFam" id="2.40.30.10:FF:000007">
    <property type="entry name" value="Translation initiation factor IF-2"/>
    <property type="match status" value="1"/>
</dbReference>
<dbReference type="FunFam" id="2.40.30.10:FF:000008">
    <property type="entry name" value="Translation initiation factor IF-2"/>
    <property type="match status" value="1"/>
</dbReference>
<dbReference type="FunFam" id="3.40.50.10050:FF:000001">
    <property type="entry name" value="Translation initiation factor IF-2"/>
    <property type="match status" value="1"/>
</dbReference>
<dbReference type="FunFam" id="3.40.50.300:FF:000019">
    <property type="entry name" value="Translation initiation factor IF-2"/>
    <property type="match status" value="1"/>
</dbReference>
<dbReference type="Gene3D" id="1.10.10.2480">
    <property type="match status" value="1"/>
</dbReference>
<dbReference type="Gene3D" id="3.40.50.300">
    <property type="entry name" value="P-loop containing nucleotide triphosphate hydrolases"/>
    <property type="match status" value="1"/>
</dbReference>
<dbReference type="Gene3D" id="2.40.30.10">
    <property type="entry name" value="Translation factors"/>
    <property type="match status" value="2"/>
</dbReference>
<dbReference type="Gene3D" id="3.40.50.10050">
    <property type="entry name" value="Translation initiation factor IF- 2, domain 3"/>
    <property type="match status" value="1"/>
</dbReference>
<dbReference type="HAMAP" id="MF_00100_B">
    <property type="entry name" value="IF_2_B"/>
    <property type="match status" value="1"/>
</dbReference>
<dbReference type="InterPro" id="IPR053905">
    <property type="entry name" value="EF-G-like_DII"/>
</dbReference>
<dbReference type="InterPro" id="IPR044145">
    <property type="entry name" value="IF2_II"/>
</dbReference>
<dbReference type="InterPro" id="IPR006847">
    <property type="entry name" value="IF2_N"/>
</dbReference>
<dbReference type="InterPro" id="IPR027417">
    <property type="entry name" value="P-loop_NTPase"/>
</dbReference>
<dbReference type="InterPro" id="IPR005225">
    <property type="entry name" value="Small_GTP-bd"/>
</dbReference>
<dbReference type="InterPro" id="IPR000795">
    <property type="entry name" value="T_Tr_GTP-bd_dom"/>
</dbReference>
<dbReference type="InterPro" id="IPR000178">
    <property type="entry name" value="TF_IF2_bacterial-like"/>
</dbReference>
<dbReference type="InterPro" id="IPR015760">
    <property type="entry name" value="TIF_IF2"/>
</dbReference>
<dbReference type="InterPro" id="IPR023115">
    <property type="entry name" value="TIF_IF2_dom3"/>
</dbReference>
<dbReference type="InterPro" id="IPR036925">
    <property type="entry name" value="TIF_IF2_dom3_sf"/>
</dbReference>
<dbReference type="InterPro" id="IPR009000">
    <property type="entry name" value="Transl_B-barrel_sf"/>
</dbReference>
<dbReference type="NCBIfam" id="TIGR00487">
    <property type="entry name" value="IF-2"/>
    <property type="match status" value="1"/>
</dbReference>
<dbReference type="NCBIfam" id="TIGR00231">
    <property type="entry name" value="small_GTP"/>
    <property type="match status" value="1"/>
</dbReference>
<dbReference type="PANTHER" id="PTHR43381:SF5">
    <property type="entry name" value="TR-TYPE G DOMAIN-CONTAINING PROTEIN"/>
    <property type="match status" value="1"/>
</dbReference>
<dbReference type="PANTHER" id="PTHR43381">
    <property type="entry name" value="TRANSLATION INITIATION FACTOR IF-2-RELATED"/>
    <property type="match status" value="1"/>
</dbReference>
<dbReference type="Pfam" id="PF22042">
    <property type="entry name" value="EF-G_D2"/>
    <property type="match status" value="1"/>
</dbReference>
<dbReference type="Pfam" id="PF00009">
    <property type="entry name" value="GTP_EFTU"/>
    <property type="match status" value="1"/>
</dbReference>
<dbReference type="Pfam" id="PF11987">
    <property type="entry name" value="IF-2"/>
    <property type="match status" value="1"/>
</dbReference>
<dbReference type="Pfam" id="PF04760">
    <property type="entry name" value="IF2_N"/>
    <property type="match status" value="2"/>
</dbReference>
<dbReference type="SUPFAM" id="SSF52156">
    <property type="entry name" value="Initiation factor IF2/eIF5b, domain 3"/>
    <property type="match status" value="1"/>
</dbReference>
<dbReference type="SUPFAM" id="SSF52540">
    <property type="entry name" value="P-loop containing nucleoside triphosphate hydrolases"/>
    <property type="match status" value="1"/>
</dbReference>
<dbReference type="SUPFAM" id="SSF50447">
    <property type="entry name" value="Translation proteins"/>
    <property type="match status" value="2"/>
</dbReference>
<dbReference type="PROSITE" id="PS51722">
    <property type="entry name" value="G_TR_2"/>
    <property type="match status" value="1"/>
</dbReference>
<organism>
    <name type="scientific">Lacticaseibacillus paracasei (strain ATCC 334 / BCRC 17002 / CCUG 31169 / CIP 107868 / KCTC 3260 / NRRL B-441)</name>
    <name type="common">Lactobacillus paracasei</name>
    <dbReference type="NCBI Taxonomy" id="321967"/>
    <lineage>
        <taxon>Bacteria</taxon>
        <taxon>Bacillati</taxon>
        <taxon>Bacillota</taxon>
        <taxon>Bacilli</taxon>
        <taxon>Lactobacillales</taxon>
        <taxon>Lactobacillaceae</taxon>
        <taxon>Lacticaseibacillus</taxon>
    </lineage>
</organism>
<name>IF2_LACP3</name>
<comment type="function">
    <text evidence="2">One of the essential components for the initiation of protein synthesis. Protects formylmethionyl-tRNA from spontaneous hydrolysis and promotes its binding to the 30S ribosomal subunits. Also involved in the hydrolysis of GTP during the formation of the 70S ribosomal complex.</text>
</comment>
<comment type="subcellular location">
    <subcellularLocation>
        <location evidence="2">Cytoplasm</location>
    </subcellularLocation>
</comment>
<comment type="similarity">
    <text evidence="2">Belongs to the TRAFAC class translation factor GTPase superfamily. Classic translation factor GTPase family. IF-2 subfamily.</text>
</comment>
<evidence type="ECO:0000250" key="1"/>
<evidence type="ECO:0000255" key="2">
    <source>
        <dbReference type="HAMAP-Rule" id="MF_00100"/>
    </source>
</evidence>
<evidence type="ECO:0000256" key="3">
    <source>
        <dbReference type="SAM" id="MobiDB-lite"/>
    </source>
</evidence>